<reference key="1">
    <citation type="journal article" date="2010" name="BMC Genomics">
        <title>A genomic perspective on the potential of Actinobacillus succinogenes for industrial succinate production.</title>
        <authorList>
            <person name="McKinlay J.B."/>
            <person name="Laivenieks M."/>
            <person name="Schindler B.D."/>
            <person name="McKinlay A.A."/>
            <person name="Siddaramappa S."/>
            <person name="Challacombe J.F."/>
            <person name="Lowry S.R."/>
            <person name="Clum A."/>
            <person name="Lapidus A.L."/>
            <person name="Burkhart K.B."/>
            <person name="Harkins V."/>
            <person name="Vieille C."/>
        </authorList>
    </citation>
    <scope>NUCLEOTIDE SEQUENCE [LARGE SCALE GENOMIC DNA]</scope>
    <source>
        <strain>ATCC 55618 / DSM 22257 / CCUG 43843 / 130Z</strain>
    </source>
</reference>
<accession>A6VKS7</accession>
<proteinExistence type="inferred from homology"/>
<organism>
    <name type="scientific">Actinobacillus succinogenes (strain ATCC 55618 / DSM 22257 / CCUG 43843 / 130Z)</name>
    <dbReference type="NCBI Taxonomy" id="339671"/>
    <lineage>
        <taxon>Bacteria</taxon>
        <taxon>Pseudomonadati</taxon>
        <taxon>Pseudomonadota</taxon>
        <taxon>Gammaproteobacteria</taxon>
        <taxon>Pasteurellales</taxon>
        <taxon>Pasteurellaceae</taxon>
        <taxon>Actinobacillus</taxon>
    </lineage>
</organism>
<sequence>MKKTTIINAQLSYAIATLGHTETLTLCDAGLPIPNSSNRIDLALTKGIPSFLETLYAVTSEMFVERAILASEIKEKNPEILTALLAHLSQLATKQGNQIPVEFVSHEKFKKLTHDSKGIVRSGECSPYANIILVSGVPF</sequence>
<evidence type="ECO:0000255" key="1">
    <source>
        <dbReference type="HAMAP-Rule" id="MF_01661"/>
    </source>
</evidence>
<name>RBSD_ACTSZ</name>
<keyword id="KW-0119">Carbohydrate metabolism</keyword>
<keyword id="KW-0963">Cytoplasm</keyword>
<keyword id="KW-0413">Isomerase</keyword>
<keyword id="KW-1185">Reference proteome</keyword>
<gene>
    <name evidence="1" type="primary">rbsD</name>
    <name type="ordered locus">Asuc_0194</name>
</gene>
<feature type="chain" id="PRO_0000346166" description="D-ribose pyranase">
    <location>
        <begin position="1"/>
        <end position="139"/>
    </location>
</feature>
<feature type="active site" description="Proton donor" evidence="1">
    <location>
        <position position="20"/>
    </location>
</feature>
<feature type="binding site" evidence="1">
    <location>
        <position position="28"/>
    </location>
    <ligand>
        <name>substrate</name>
    </ligand>
</feature>
<feature type="binding site" evidence="1">
    <location>
        <position position="106"/>
    </location>
    <ligand>
        <name>substrate</name>
    </ligand>
</feature>
<feature type="binding site" evidence="1">
    <location>
        <begin position="128"/>
        <end position="130"/>
    </location>
    <ligand>
        <name>substrate</name>
    </ligand>
</feature>
<dbReference type="EC" id="5.4.99.62" evidence="1"/>
<dbReference type="EMBL" id="CP000746">
    <property type="protein sequence ID" value="ABR73574.1"/>
    <property type="molecule type" value="Genomic_DNA"/>
</dbReference>
<dbReference type="RefSeq" id="WP_011978850.1">
    <property type="nucleotide sequence ID" value="NC_009655.1"/>
</dbReference>
<dbReference type="SMR" id="A6VKS7"/>
<dbReference type="STRING" id="339671.Asuc_0194"/>
<dbReference type="KEGG" id="asu:Asuc_0194"/>
<dbReference type="eggNOG" id="COG1869">
    <property type="taxonomic scope" value="Bacteria"/>
</dbReference>
<dbReference type="HOGENOM" id="CLU_135498_0_0_6"/>
<dbReference type="OrthoDB" id="9805009at2"/>
<dbReference type="UniPathway" id="UPA00916">
    <property type="reaction ID" value="UER00888"/>
</dbReference>
<dbReference type="Proteomes" id="UP000001114">
    <property type="component" value="Chromosome"/>
</dbReference>
<dbReference type="GO" id="GO:0005829">
    <property type="term" value="C:cytosol"/>
    <property type="evidence" value="ECO:0007669"/>
    <property type="project" value="TreeGrafter"/>
</dbReference>
<dbReference type="GO" id="GO:0062193">
    <property type="term" value="F:D-ribose pyranase activity"/>
    <property type="evidence" value="ECO:0007669"/>
    <property type="project" value="UniProtKB-EC"/>
</dbReference>
<dbReference type="GO" id="GO:0016872">
    <property type="term" value="F:intramolecular lyase activity"/>
    <property type="evidence" value="ECO:0007669"/>
    <property type="project" value="UniProtKB-UniRule"/>
</dbReference>
<dbReference type="GO" id="GO:0048029">
    <property type="term" value="F:monosaccharide binding"/>
    <property type="evidence" value="ECO:0007669"/>
    <property type="project" value="InterPro"/>
</dbReference>
<dbReference type="GO" id="GO:0019303">
    <property type="term" value="P:D-ribose catabolic process"/>
    <property type="evidence" value="ECO:0007669"/>
    <property type="project" value="UniProtKB-UniRule"/>
</dbReference>
<dbReference type="Gene3D" id="3.40.1650.10">
    <property type="entry name" value="RbsD-like domain"/>
    <property type="match status" value="1"/>
</dbReference>
<dbReference type="HAMAP" id="MF_01661">
    <property type="entry name" value="D_rib_pyranase"/>
    <property type="match status" value="1"/>
</dbReference>
<dbReference type="InterPro" id="IPR023064">
    <property type="entry name" value="D-ribose_pyranase"/>
</dbReference>
<dbReference type="InterPro" id="IPR023750">
    <property type="entry name" value="RbsD-like_sf"/>
</dbReference>
<dbReference type="InterPro" id="IPR007721">
    <property type="entry name" value="RbsD_FucU"/>
</dbReference>
<dbReference type="NCBIfam" id="NF008761">
    <property type="entry name" value="PRK11797.1"/>
    <property type="match status" value="1"/>
</dbReference>
<dbReference type="PANTHER" id="PTHR37831">
    <property type="entry name" value="D-RIBOSE PYRANASE"/>
    <property type="match status" value="1"/>
</dbReference>
<dbReference type="PANTHER" id="PTHR37831:SF1">
    <property type="entry name" value="D-RIBOSE PYRANASE"/>
    <property type="match status" value="1"/>
</dbReference>
<dbReference type="Pfam" id="PF05025">
    <property type="entry name" value="RbsD_FucU"/>
    <property type="match status" value="1"/>
</dbReference>
<dbReference type="SUPFAM" id="SSF102546">
    <property type="entry name" value="RbsD-like"/>
    <property type="match status" value="1"/>
</dbReference>
<comment type="function">
    <text evidence="1">Catalyzes the interconversion of beta-pyran and beta-furan forms of D-ribose.</text>
</comment>
<comment type="catalytic activity">
    <reaction evidence="1">
        <text>beta-D-ribopyranose = beta-D-ribofuranose</text>
        <dbReference type="Rhea" id="RHEA:25432"/>
        <dbReference type="ChEBI" id="CHEBI:27476"/>
        <dbReference type="ChEBI" id="CHEBI:47002"/>
        <dbReference type="EC" id="5.4.99.62"/>
    </reaction>
</comment>
<comment type="pathway">
    <text evidence="1">Carbohydrate metabolism; D-ribose degradation; D-ribose 5-phosphate from beta-D-ribopyranose: step 1/2.</text>
</comment>
<comment type="subunit">
    <text evidence="1">Homodecamer.</text>
</comment>
<comment type="subcellular location">
    <subcellularLocation>
        <location evidence="1">Cytoplasm</location>
    </subcellularLocation>
</comment>
<comment type="similarity">
    <text evidence="1">Belongs to the RbsD / FucU family. RbsD subfamily.</text>
</comment>
<protein>
    <recommendedName>
        <fullName evidence="1">D-ribose pyranase</fullName>
        <ecNumber evidence="1">5.4.99.62</ecNumber>
    </recommendedName>
</protein>